<protein>
    <recommendedName>
        <fullName evidence="1">Porphobilinogen deaminase</fullName>
        <shortName evidence="1">PBG</shortName>
        <ecNumber evidence="1">2.5.1.61</ecNumber>
    </recommendedName>
    <alternativeName>
        <fullName evidence="1">Hydroxymethylbilane synthase</fullName>
        <shortName evidence="1">HMBS</shortName>
    </alternativeName>
    <alternativeName>
        <fullName evidence="1">Pre-uroporphyrinogen synthase</fullName>
    </alternativeName>
</protein>
<dbReference type="EC" id="2.5.1.61" evidence="1"/>
<dbReference type="EMBL" id="CP000887">
    <property type="protein sequence ID" value="ACD73251.1"/>
    <property type="molecule type" value="Genomic_DNA"/>
</dbReference>
<dbReference type="RefSeq" id="WP_002964957.1">
    <property type="nucleotide sequence ID" value="NC_010742.1"/>
</dbReference>
<dbReference type="SMR" id="B2S842"/>
<dbReference type="GeneID" id="93017780"/>
<dbReference type="KEGG" id="bmc:BAbS19_I17690"/>
<dbReference type="HOGENOM" id="CLU_019704_1_2_5"/>
<dbReference type="UniPathway" id="UPA00251">
    <property type="reaction ID" value="UER00319"/>
</dbReference>
<dbReference type="Proteomes" id="UP000002565">
    <property type="component" value="Chromosome 1"/>
</dbReference>
<dbReference type="GO" id="GO:0005737">
    <property type="term" value="C:cytoplasm"/>
    <property type="evidence" value="ECO:0007669"/>
    <property type="project" value="TreeGrafter"/>
</dbReference>
<dbReference type="GO" id="GO:0004418">
    <property type="term" value="F:hydroxymethylbilane synthase activity"/>
    <property type="evidence" value="ECO:0007669"/>
    <property type="project" value="UniProtKB-UniRule"/>
</dbReference>
<dbReference type="GO" id="GO:0006782">
    <property type="term" value="P:protoporphyrinogen IX biosynthetic process"/>
    <property type="evidence" value="ECO:0007669"/>
    <property type="project" value="UniProtKB-UniRule"/>
</dbReference>
<dbReference type="FunFam" id="3.40.190.10:FF:000004">
    <property type="entry name" value="Porphobilinogen deaminase"/>
    <property type="match status" value="1"/>
</dbReference>
<dbReference type="FunFam" id="3.40.190.10:FF:000005">
    <property type="entry name" value="Porphobilinogen deaminase"/>
    <property type="match status" value="1"/>
</dbReference>
<dbReference type="Gene3D" id="3.40.190.10">
    <property type="entry name" value="Periplasmic binding protein-like II"/>
    <property type="match status" value="2"/>
</dbReference>
<dbReference type="Gene3D" id="3.30.160.40">
    <property type="entry name" value="Porphobilinogen deaminase, C-terminal domain"/>
    <property type="match status" value="1"/>
</dbReference>
<dbReference type="HAMAP" id="MF_00260">
    <property type="entry name" value="Porphobil_deam"/>
    <property type="match status" value="1"/>
</dbReference>
<dbReference type="InterPro" id="IPR000860">
    <property type="entry name" value="HemC"/>
</dbReference>
<dbReference type="InterPro" id="IPR022419">
    <property type="entry name" value="Porphobilin_deaminase_cofac_BS"/>
</dbReference>
<dbReference type="InterPro" id="IPR022417">
    <property type="entry name" value="Porphobilin_deaminase_N"/>
</dbReference>
<dbReference type="InterPro" id="IPR022418">
    <property type="entry name" value="Porphobilinogen_deaminase_C"/>
</dbReference>
<dbReference type="InterPro" id="IPR036803">
    <property type="entry name" value="Porphobilinogen_deaminase_C_sf"/>
</dbReference>
<dbReference type="NCBIfam" id="TIGR00212">
    <property type="entry name" value="hemC"/>
    <property type="match status" value="1"/>
</dbReference>
<dbReference type="PANTHER" id="PTHR11557">
    <property type="entry name" value="PORPHOBILINOGEN DEAMINASE"/>
    <property type="match status" value="1"/>
</dbReference>
<dbReference type="PANTHER" id="PTHR11557:SF0">
    <property type="entry name" value="PORPHOBILINOGEN DEAMINASE"/>
    <property type="match status" value="1"/>
</dbReference>
<dbReference type="Pfam" id="PF01379">
    <property type="entry name" value="Porphobil_deam"/>
    <property type="match status" value="1"/>
</dbReference>
<dbReference type="Pfam" id="PF03900">
    <property type="entry name" value="Porphobil_deamC"/>
    <property type="match status" value="1"/>
</dbReference>
<dbReference type="PIRSF" id="PIRSF001438">
    <property type="entry name" value="4pyrrol_synth_OHMeBilane_synth"/>
    <property type="match status" value="1"/>
</dbReference>
<dbReference type="PRINTS" id="PR00151">
    <property type="entry name" value="PORPHBDMNASE"/>
</dbReference>
<dbReference type="SUPFAM" id="SSF53850">
    <property type="entry name" value="Periplasmic binding protein-like II"/>
    <property type="match status" value="1"/>
</dbReference>
<dbReference type="SUPFAM" id="SSF54782">
    <property type="entry name" value="Porphobilinogen deaminase (hydroxymethylbilane synthase), C-terminal domain"/>
    <property type="match status" value="1"/>
</dbReference>
<dbReference type="PROSITE" id="PS00533">
    <property type="entry name" value="PORPHOBILINOGEN_DEAM"/>
    <property type="match status" value="1"/>
</dbReference>
<keyword id="KW-0627">Porphyrin biosynthesis</keyword>
<keyword id="KW-0808">Transferase</keyword>
<accession>B2S842</accession>
<feature type="chain" id="PRO_1000114136" description="Porphobilinogen deaminase">
    <location>
        <begin position="1"/>
        <end position="314"/>
    </location>
</feature>
<feature type="modified residue" description="S-(dipyrrolylmethanemethyl)cysteine" evidence="1">
    <location>
        <position position="249"/>
    </location>
</feature>
<organism>
    <name type="scientific">Brucella abortus (strain S19)</name>
    <dbReference type="NCBI Taxonomy" id="430066"/>
    <lineage>
        <taxon>Bacteria</taxon>
        <taxon>Pseudomonadati</taxon>
        <taxon>Pseudomonadota</taxon>
        <taxon>Alphaproteobacteria</taxon>
        <taxon>Hyphomicrobiales</taxon>
        <taxon>Brucellaceae</taxon>
        <taxon>Brucella/Ochrobactrum group</taxon>
        <taxon>Brucella</taxon>
    </lineage>
</organism>
<proteinExistence type="inferred from homology"/>
<name>HEM3_BRUA1</name>
<reference key="1">
    <citation type="journal article" date="2008" name="PLoS ONE">
        <title>Genome sequence of Brucella abortus vaccine strain S19 compared to virulent strains yields candidate virulence genes.</title>
        <authorList>
            <person name="Crasta O.R."/>
            <person name="Folkerts O."/>
            <person name="Fei Z."/>
            <person name="Mane S.P."/>
            <person name="Evans C."/>
            <person name="Martino-Catt S."/>
            <person name="Bricker B."/>
            <person name="Yu G."/>
            <person name="Du L."/>
            <person name="Sobral B.W."/>
        </authorList>
    </citation>
    <scope>NUCLEOTIDE SEQUENCE [LARGE SCALE GENOMIC DNA]</scope>
    <source>
        <strain>S19</strain>
    </source>
</reference>
<evidence type="ECO:0000255" key="1">
    <source>
        <dbReference type="HAMAP-Rule" id="MF_00260"/>
    </source>
</evidence>
<comment type="function">
    <text evidence="1">Tetrapolymerization of the monopyrrole PBG into the hydroxymethylbilane pre-uroporphyrinogen in several discrete steps.</text>
</comment>
<comment type="catalytic activity">
    <reaction evidence="1">
        <text>4 porphobilinogen + H2O = hydroxymethylbilane + 4 NH4(+)</text>
        <dbReference type="Rhea" id="RHEA:13185"/>
        <dbReference type="ChEBI" id="CHEBI:15377"/>
        <dbReference type="ChEBI" id="CHEBI:28938"/>
        <dbReference type="ChEBI" id="CHEBI:57845"/>
        <dbReference type="ChEBI" id="CHEBI:58126"/>
        <dbReference type="EC" id="2.5.1.61"/>
    </reaction>
</comment>
<comment type="cofactor">
    <cofactor evidence="1">
        <name>dipyrromethane</name>
        <dbReference type="ChEBI" id="CHEBI:60342"/>
    </cofactor>
    <text evidence="1">Binds 1 dipyrromethane group covalently.</text>
</comment>
<comment type="pathway">
    <text evidence="1">Porphyrin-containing compound metabolism; protoporphyrin-IX biosynthesis; coproporphyrinogen-III from 5-aminolevulinate: step 2/4.</text>
</comment>
<comment type="subunit">
    <text evidence="1">Monomer.</text>
</comment>
<comment type="miscellaneous">
    <text evidence="1">The porphobilinogen subunits are added to the dipyrromethane group.</text>
</comment>
<comment type="similarity">
    <text evidence="1">Belongs to the HMBS family.</text>
</comment>
<sequence>MQTASFKNGTLKIGTRGSKLALAQAYLTRRLLQEAHGLPEDAIEILPMSTAGDRIQDRPLSEVGGKGLFTEEIEQALKDGRIDIAVHSTKDMPTALPEGLHLSVFLEREDPRDAFIGRSARRFMDLPQGATVGSSSLRRQALIRRLRPDIEVVMYRGNVDTRLRKLDAGEVDGTFLACAGLRRLGLADVITDVLDPSVFPPAPGQGAIGIESRIGDERIDVLLAPLAHRETQIALACERAFLGALDGSCRTPIAGLATVEGDRLSFRGMILTPDGRQAHEVTAEGVVSDAAALGTDAANRVRAMAGPHFFDGWQ</sequence>
<gene>
    <name evidence="1" type="primary">hemC</name>
    <name type="ordered locus">BAbS19_I17690</name>
</gene>